<comment type="function">
    <text evidence="1">Effector proteins function to alter host cell physiology and promote bacterial survival in host tissues. This protease possesses deubiquitinating and deneddylating activities (By similarity).</text>
</comment>
<comment type="subcellular location">
    <subcellularLocation>
        <location evidence="1">Secreted</location>
    </subcellularLocation>
    <subcellularLocation>
        <location evidence="1">Host cell</location>
    </subcellularLocation>
    <subcellularLocation>
        <location evidence="1">Membrane</location>
        <topology evidence="1">Single-pass membrane protein</topology>
    </subcellularLocation>
    <text evidence="1">Secreted, and delivered into the host cell.</text>
</comment>
<comment type="similarity">
    <text evidence="3">Belongs to the peptidase C48 family.</text>
</comment>
<name>CDUB2_CHLTA</name>
<dbReference type="EC" id="3.4.22.-"/>
<dbReference type="EMBL" id="CP000051">
    <property type="protein sequence ID" value="AAX51153.1"/>
    <property type="molecule type" value="Genomic_DNA"/>
</dbReference>
<dbReference type="RefSeq" id="WP_011324910.1">
    <property type="nucleotide sequence ID" value="NC_007429.1"/>
</dbReference>
<dbReference type="SMR" id="Q3KKG9"/>
<dbReference type="MEROPS" id="C48.033"/>
<dbReference type="KEGG" id="cta:CTA_0947"/>
<dbReference type="HOGENOM" id="CLU_067510_0_0_0"/>
<dbReference type="Proteomes" id="UP000002532">
    <property type="component" value="Chromosome"/>
</dbReference>
<dbReference type="GO" id="GO:0005576">
    <property type="term" value="C:extracellular region"/>
    <property type="evidence" value="ECO:0000250"/>
    <property type="project" value="UniProtKB"/>
</dbReference>
<dbReference type="GO" id="GO:0043657">
    <property type="term" value="C:host cell"/>
    <property type="evidence" value="ECO:0007669"/>
    <property type="project" value="UniProtKB-SubCell"/>
</dbReference>
<dbReference type="GO" id="GO:0016020">
    <property type="term" value="C:membrane"/>
    <property type="evidence" value="ECO:0007669"/>
    <property type="project" value="UniProtKB-SubCell"/>
</dbReference>
<dbReference type="GO" id="GO:0004843">
    <property type="term" value="F:cysteine-type deubiquitinase activity"/>
    <property type="evidence" value="ECO:0000250"/>
    <property type="project" value="UniProtKB"/>
</dbReference>
<dbReference type="GO" id="GO:0019784">
    <property type="term" value="F:deNEDDylase activity"/>
    <property type="evidence" value="ECO:0000250"/>
    <property type="project" value="UniProtKB"/>
</dbReference>
<dbReference type="GO" id="GO:0000338">
    <property type="term" value="P:protein deneddylation"/>
    <property type="evidence" value="ECO:0000250"/>
    <property type="project" value="UniProtKB"/>
</dbReference>
<dbReference type="GO" id="GO:0016579">
    <property type="term" value="P:protein deubiquitination"/>
    <property type="evidence" value="ECO:0000250"/>
    <property type="project" value="UniProtKB"/>
</dbReference>
<dbReference type="GO" id="GO:0006508">
    <property type="term" value="P:proteolysis"/>
    <property type="evidence" value="ECO:0007669"/>
    <property type="project" value="UniProtKB-KW"/>
</dbReference>
<dbReference type="FunFam" id="3.40.395.10:FF:000012">
    <property type="entry name" value="Deubiquitinase and deneddylase Dub2"/>
    <property type="match status" value="1"/>
</dbReference>
<dbReference type="Gene3D" id="3.40.395.10">
    <property type="entry name" value="Adenoviral Proteinase, Chain A"/>
    <property type="match status" value="1"/>
</dbReference>
<dbReference type="InterPro" id="IPR038765">
    <property type="entry name" value="Papain-like_cys_pep_sf"/>
</dbReference>
<dbReference type="InterPro" id="IPR003653">
    <property type="entry name" value="Peptidase_C48_C"/>
</dbReference>
<dbReference type="Pfam" id="PF02902">
    <property type="entry name" value="Peptidase_C48"/>
    <property type="match status" value="1"/>
</dbReference>
<dbReference type="SUPFAM" id="SSF54001">
    <property type="entry name" value="Cysteine proteinases"/>
    <property type="match status" value="1"/>
</dbReference>
<accession>Q3KKG9</accession>
<organism>
    <name type="scientific">Chlamydia trachomatis serovar A (strain ATCC VR-571B / DSM 19440 / HAR-13)</name>
    <dbReference type="NCBI Taxonomy" id="315277"/>
    <lineage>
        <taxon>Bacteria</taxon>
        <taxon>Pseudomonadati</taxon>
        <taxon>Chlamydiota</taxon>
        <taxon>Chlamydiia</taxon>
        <taxon>Chlamydiales</taxon>
        <taxon>Chlamydiaceae</taxon>
        <taxon>Chlamydia/Chlamydophila group</taxon>
        <taxon>Chlamydia</taxon>
    </lineage>
</organism>
<protein>
    <recommendedName>
        <fullName>Deubiquitinase and deneddylase Dub2</fullName>
        <shortName>ChlaDub2</shortName>
        <ecNumber>3.4.22.-</ecNumber>
    </recommendedName>
</protein>
<sequence length="339" mass="38410">MEPIHNPPPQTCSYSRPSTTYTSFKDASCGTKVTRIIIALFLIVISCGLILCAYTFRDLLDADYSAQEGPQQATKLLQQLDKVLTGPPLPIWDNEHLFQFSCLMQNKHRRVLPIDICNPLTKFNFLEYICNCLMTKQSVNVNETDMCELFCPPTCTPENYRRLLCTSSVFPFVMWHDPSADTQEAMLTKMDQTMSSGRVGNSHWVLVIVDIEHRCVTFFDSFYNYIASPQQMREQLEGLAASLGAIYPKEGGADSDQEELLSPFQVRIGSTVKVQSPGEFTCGAWCCQFLAWYLENPDFDLEEKVPTNPSERRALLADFISTTEQAMSRYSSLSWPTTD</sequence>
<reference key="1">
    <citation type="journal article" date="2005" name="Infect. Immun.">
        <title>Comparative genomic analysis of Chlamydia trachomatis oculotropic and genitotropic strains.</title>
        <authorList>
            <person name="Carlson J.H."/>
            <person name="Porcella S.F."/>
            <person name="McClarty G."/>
            <person name="Caldwell H.D."/>
        </authorList>
    </citation>
    <scope>NUCLEOTIDE SEQUENCE [LARGE SCALE GENOMIC DNA]</scope>
    <source>
        <strain>ATCC VR-571B / DSM 19440 / HAR-13</strain>
    </source>
</reference>
<proteinExistence type="inferred from homology"/>
<feature type="chain" id="PRO_0000396497" description="Deubiquitinase and deneddylase Dub2">
    <location>
        <begin position="1"/>
        <end position="339"/>
    </location>
</feature>
<feature type="transmembrane region" description="Helical" evidence="2">
    <location>
        <begin position="36"/>
        <end position="56"/>
    </location>
</feature>
<feature type="active site" evidence="2">
    <location>
        <position position="203"/>
    </location>
</feature>
<feature type="active site" evidence="2">
    <location>
        <position position="220"/>
    </location>
</feature>
<feature type="active site" evidence="2">
    <location>
        <position position="282"/>
    </location>
</feature>
<keyword id="KW-0378">Hydrolase</keyword>
<keyword id="KW-0472">Membrane</keyword>
<keyword id="KW-0645">Protease</keyword>
<keyword id="KW-0964">Secreted</keyword>
<keyword id="KW-0788">Thiol protease</keyword>
<keyword id="KW-0812">Transmembrane</keyword>
<keyword id="KW-1133">Transmembrane helix</keyword>
<keyword id="KW-0833">Ubl conjugation pathway</keyword>
<keyword id="KW-0843">Virulence</keyword>
<gene>
    <name type="primary">cdu2</name>
    <name type="ordered locus">CTA_0947</name>
</gene>
<evidence type="ECO:0000250" key="1"/>
<evidence type="ECO:0000255" key="2"/>
<evidence type="ECO:0000305" key="3"/>